<accession>P60728</accession>
<accession>A0A1R3XW54</accession>
<accession>O06045</accession>
<accession>P95050</accession>
<accession>X2BFS0</accession>
<name>RL4_MYCBO</name>
<comment type="function">
    <text evidence="1">One of the primary rRNA binding proteins, this protein initially binds near the 5'-end of the 23S rRNA. It is important during the early stages of 50S assembly. It makes multiple contacts with different domains of the 23S rRNA in the assembled 50S subunit and ribosome.</text>
</comment>
<comment type="function">
    <text evidence="1">Forms part of the polypeptide exit tunnel.</text>
</comment>
<comment type="subunit">
    <text evidence="1">Part of the 50S ribosomal subunit.</text>
</comment>
<comment type="similarity">
    <text evidence="1">Belongs to the universal ribosomal protein uL4 family.</text>
</comment>
<keyword id="KW-1185">Reference proteome</keyword>
<keyword id="KW-0687">Ribonucleoprotein</keyword>
<keyword id="KW-0689">Ribosomal protein</keyword>
<keyword id="KW-0694">RNA-binding</keyword>
<keyword id="KW-0699">rRNA-binding</keyword>
<evidence type="ECO:0000255" key="1">
    <source>
        <dbReference type="HAMAP-Rule" id="MF_01328"/>
    </source>
</evidence>
<evidence type="ECO:0000256" key="2">
    <source>
        <dbReference type="SAM" id="MobiDB-lite"/>
    </source>
</evidence>
<evidence type="ECO:0000305" key="3"/>
<dbReference type="EMBL" id="Y13228">
    <property type="protein sequence ID" value="CAA73673.1"/>
    <property type="molecule type" value="Genomic_DNA"/>
</dbReference>
<dbReference type="EMBL" id="LT708304">
    <property type="protein sequence ID" value="SIT99321.1"/>
    <property type="molecule type" value="Genomic_DNA"/>
</dbReference>
<dbReference type="RefSeq" id="NP_854380.1">
    <property type="nucleotide sequence ID" value="NC_002945.3"/>
</dbReference>
<dbReference type="RefSeq" id="WP_003403580.1">
    <property type="nucleotide sequence ID" value="NC_002945.4"/>
</dbReference>
<dbReference type="SMR" id="P60728"/>
<dbReference type="KEGG" id="mbo:BQ2027_MB0722"/>
<dbReference type="PATRIC" id="fig|233413.5.peg.788"/>
<dbReference type="Proteomes" id="UP000001419">
    <property type="component" value="Chromosome"/>
</dbReference>
<dbReference type="GO" id="GO:1990904">
    <property type="term" value="C:ribonucleoprotein complex"/>
    <property type="evidence" value="ECO:0007669"/>
    <property type="project" value="UniProtKB-KW"/>
</dbReference>
<dbReference type="GO" id="GO:0005840">
    <property type="term" value="C:ribosome"/>
    <property type="evidence" value="ECO:0007669"/>
    <property type="project" value="UniProtKB-KW"/>
</dbReference>
<dbReference type="GO" id="GO:0019843">
    <property type="term" value="F:rRNA binding"/>
    <property type="evidence" value="ECO:0007669"/>
    <property type="project" value="UniProtKB-UniRule"/>
</dbReference>
<dbReference type="GO" id="GO:0003735">
    <property type="term" value="F:structural constituent of ribosome"/>
    <property type="evidence" value="ECO:0007669"/>
    <property type="project" value="InterPro"/>
</dbReference>
<dbReference type="GO" id="GO:0006412">
    <property type="term" value="P:translation"/>
    <property type="evidence" value="ECO:0007669"/>
    <property type="project" value="UniProtKB-UniRule"/>
</dbReference>
<dbReference type="FunFam" id="3.40.1370.10:FF:000004">
    <property type="entry name" value="50S ribosomal protein L4"/>
    <property type="match status" value="1"/>
</dbReference>
<dbReference type="Gene3D" id="3.40.1370.10">
    <property type="match status" value="1"/>
</dbReference>
<dbReference type="HAMAP" id="MF_01328_B">
    <property type="entry name" value="Ribosomal_uL4_B"/>
    <property type="match status" value="1"/>
</dbReference>
<dbReference type="InterPro" id="IPR002136">
    <property type="entry name" value="Ribosomal_uL4"/>
</dbReference>
<dbReference type="InterPro" id="IPR013005">
    <property type="entry name" value="Ribosomal_uL4-like"/>
</dbReference>
<dbReference type="InterPro" id="IPR023574">
    <property type="entry name" value="Ribosomal_uL4_dom_sf"/>
</dbReference>
<dbReference type="NCBIfam" id="TIGR03953">
    <property type="entry name" value="rplD_bact"/>
    <property type="match status" value="1"/>
</dbReference>
<dbReference type="PANTHER" id="PTHR10746">
    <property type="entry name" value="50S RIBOSOMAL PROTEIN L4"/>
    <property type="match status" value="1"/>
</dbReference>
<dbReference type="PANTHER" id="PTHR10746:SF6">
    <property type="entry name" value="LARGE RIBOSOMAL SUBUNIT PROTEIN UL4M"/>
    <property type="match status" value="1"/>
</dbReference>
<dbReference type="Pfam" id="PF00573">
    <property type="entry name" value="Ribosomal_L4"/>
    <property type="match status" value="1"/>
</dbReference>
<dbReference type="SUPFAM" id="SSF52166">
    <property type="entry name" value="Ribosomal protein L4"/>
    <property type="match status" value="1"/>
</dbReference>
<reference key="1">
    <citation type="journal article" date="1997" name="Mol. Microbiol.">
        <title>The role of ribosomal RNAs in macrolide resistance.</title>
        <authorList>
            <person name="Sander P."/>
            <person name="Prammananan T."/>
            <person name="Meier A."/>
            <person name="Frischkorn K."/>
            <person name="Boettger E.C."/>
        </authorList>
    </citation>
    <scope>NUCLEOTIDE SEQUENCE [GENOMIC DNA]</scope>
    <source>
        <strain>BCG</strain>
    </source>
</reference>
<reference key="2">
    <citation type="journal article" date="2003" name="Proc. Natl. Acad. Sci. U.S.A.">
        <title>The complete genome sequence of Mycobacterium bovis.</title>
        <authorList>
            <person name="Garnier T."/>
            <person name="Eiglmeier K."/>
            <person name="Camus J.-C."/>
            <person name="Medina N."/>
            <person name="Mansoor H."/>
            <person name="Pryor M."/>
            <person name="Duthoy S."/>
            <person name="Grondin S."/>
            <person name="Lacroix C."/>
            <person name="Monsempe C."/>
            <person name="Simon S."/>
            <person name="Harris B."/>
            <person name="Atkin R."/>
            <person name="Doggett J."/>
            <person name="Mayes R."/>
            <person name="Keating L."/>
            <person name="Wheeler P.R."/>
            <person name="Parkhill J."/>
            <person name="Barrell B.G."/>
            <person name="Cole S.T."/>
            <person name="Gordon S.V."/>
            <person name="Hewinson R.G."/>
        </authorList>
    </citation>
    <scope>NUCLEOTIDE SEQUENCE [LARGE SCALE GENOMIC DNA]</scope>
    <source>
        <strain>ATCC BAA-935 / AF2122/97</strain>
    </source>
</reference>
<reference key="3">
    <citation type="journal article" date="2017" name="Genome Announc.">
        <title>Updated reference genome sequence and annotation of Mycobacterium bovis AF2122/97.</title>
        <authorList>
            <person name="Malone K.M."/>
            <person name="Farrell D."/>
            <person name="Stuber T.P."/>
            <person name="Schubert O.T."/>
            <person name="Aebersold R."/>
            <person name="Robbe-Austerman S."/>
            <person name="Gordon S.V."/>
        </authorList>
    </citation>
    <scope>NUCLEOTIDE SEQUENCE [LARGE SCALE GENOMIC DNA]</scope>
    <scope>GENOME REANNOTATION</scope>
    <source>
        <strain>ATCC BAA-935 / AF2122/97</strain>
    </source>
</reference>
<proteinExistence type="inferred from homology"/>
<feature type="chain" id="PRO_0000129236" description="Large ribosomal subunit protein uL4">
    <location>
        <begin position="1"/>
        <end position="223"/>
    </location>
</feature>
<feature type="region of interest" description="Disordered" evidence="2">
    <location>
        <begin position="49"/>
        <end position="106"/>
    </location>
</feature>
<feature type="sequence conflict" description="In Ref. 1; CAA73673." evidence="3" ref="1">
    <original>A</original>
    <variation>V</variation>
    <location>
        <position position="152"/>
    </location>
</feature>
<feature type="sequence conflict" description="In Ref. 1; CAA73673." evidence="3" ref="1">
    <original>AGAK</original>
    <variation>GRRE</variation>
    <location>
        <begin position="170"/>
        <end position="173"/>
    </location>
</feature>
<organism>
    <name type="scientific">Mycobacterium bovis (strain ATCC BAA-935 / AF2122/97)</name>
    <dbReference type="NCBI Taxonomy" id="233413"/>
    <lineage>
        <taxon>Bacteria</taxon>
        <taxon>Bacillati</taxon>
        <taxon>Actinomycetota</taxon>
        <taxon>Actinomycetes</taxon>
        <taxon>Mycobacteriales</taxon>
        <taxon>Mycobacteriaceae</taxon>
        <taxon>Mycobacterium</taxon>
        <taxon>Mycobacterium tuberculosis complex</taxon>
    </lineage>
</organism>
<protein>
    <recommendedName>
        <fullName evidence="1">Large ribosomal subunit protein uL4</fullName>
    </recommendedName>
    <alternativeName>
        <fullName evidence="3">50S ribosomal protein L4</fullName>
    </alternativeName>
</protein>
<gene>
    <name evidence="1" type="primary">rplD</name>
    <name type="ordered locus">BQ2027_MB0722</name>
</gene>
<sequence length="223" mass="23743">MAAQEQKTLKIDVKTPAGKVDGAIELPAELFDVPANIALMHQVVTAQRAAARQGTHSTKTRGEVSGGGRKPYRQKGTGRARQGSTRAPQFTGGGVVHGPKPRDYSQRTPKKMIAAALRGALSDRARNGRIHAITELVEGQNPSTKSARAFLASLTERKQVLVVIGRSDEAGAKSVRNLPGVHILAPDQLNTYDVLRADDVVFSVEALNAYIAANTTTSEEVSA</sequence>